<accession>P13894</accession>
<protein>
    <recommendedName>
        <fullName>Large T antigen</fullName>
        <shortName>LT</shortName>
        <shortName>LT-AG</shortName>
        <ecNumber evidence="2">5.6.2.4</ecNumber>
    </recommendedName>
    <alternativeName>
        <fullName evidence="8">DNA 3'-5' helicase large T antigen</fullName>
    </alternativeName>
</protein>
<name>LT_BFPYV</name>
<comment type="function">
    <text evidence="2">Isoform large T antigen is a key early protein essential for both driving viral replication and inducing cellular transformation. Plays a role in viral genome replication by driving entry of quiescent cells into the cell cycle and by autoregulating the synthesis of viral early mRNA. Displays highly oncogenic activities by corrupting the host cellular checkpoint mechanisms that guard cell division and the transcription, replication, and repair of DNA. Participates in the modulation of cellular gene expression preceeding viral DNA replication. This step involves binding to host key cell cycle regulators retinoblastoma protein RB1/pRb and TP53. Induces the disassembly of host E2F1 transcription factors from RB1, thus promoting transcriptional activation of E2F1-regulated S-phase genes. Inhibits host TP53 binding to DNA, abrogating the ability of TP53 to stimulate gene expression. Plays the role of a TFIID-associated factor (TAF) in transcription initiation for all three RNA polymerases, by stabilizing the TBP-TFIIA complex on promoters. Initiates viral DNA replication and unwinding via interactions with the viral origin of replication. Binds two adjacent sites in the SV40 origin. The replication fork movement is facilitated by Large T antigen helicase activity. Has processive 3'-5' DNA helicase activity which requires a short 3' single-stranded region and ATP. Activates the transcription of viral late mRNA, through host TBP and TFIIA stabilization. Interferes with histone deacetylation mediated by HDAC1, leading to activation of transcription (By similarity).</text>
</comment>
<comment type="catalytic activity">
    <reaction evidence="2">
        <text>Couples ATP hydrolysis with the unwinding of duplex DNA by translocating in the 3'-5' direction.</text>
        <dbReference type="EC" id="5.6.2.4"/>
    </reaction>
</comment>
<comment type="catalytic activity">
    <reaction evidence="2">
        <text>ATP + H2O = ADP + phosphate + H(+)</text>
        <dbReference type="Rhea" id="RHEA:13065"/>
        <dbReference type="ChEBI" id="CHEBI:15377"/>
        <dbReference type="ChEBI" id="CHEBI:15378"/>
        <dbReference type="ChEBI" id="CHEBI:30616"/>
        <dbReference type="ChEBI" id="CHEBI:43474"/>
        <dbReference type="ChEBI" id="CHEBI:456216"/>
        <dbReference type="EC" id="5.6.2.4"/>
    </reaction>
</comment>
<comment type="cofactor">
    <cofactor evidence="2">
        <name>Mg(2+)</name>
        <dbReference type="ChEBI" id="CHEBI:18420"/>
    </cofactor>
    <text evidence="2">DNA helicase activity requires Mg(2+).</text>
</comment>
<comment type="subunit">
    <text evidence="1">Forms homohexamers in the presence of ATP. Interacts with host HDAC1. Interacts (via LXCXE domain) with host RB1; the interaction induces the aberrant dissociation of RB1-E2F1 complex thereby disrupting RB1's activity. Interacts (via LXCXE domain) with host pRB-related proteins RBL1 and RBL2. Interacts (via C-terminus) with host TOP1 and POLA1 allowing DNA replication. Interacts with host TP53, inhibiting TP53 binding to DNA. Interacts with host preinitiation complex components TBP, TFIIA and TFIID to regulate transcription initiation (By similarity).</text>
</comment>
<comment type="subcellular location">
    <subcellularLocation>
        <location evidence="1">Host nucleus</location>
    </subcellularLocation>
</comment>
<comment type="alternative products">
    <event type="alternative splicing"/>
    <isoform>
        <id>P13894-1</id>
        <name>Large T antigen</name>
        <sequence type="displayed"/>
    </isoform>
    <isoform>
        <id>P13895-1</id>
        <name>Small t antigen</name>
        <sequence type="external"/>
    </isoform>
</comment>
<comment type="domain">
    <text evidence="1">The J domain is essential for multiple viral activities, including virion assembly, viral DNA replication, transformation and transcriptional activation.</text>
</comment>
<comment type="domain">
    <text evidence="1">The LXCXE motif specifically binds to host pRB, RBL1, and RBL2.</text>
</comment>
<comment type="domain">
    <text evidence="1">The zinc finger region contributes to protein-protein interactions essential for the assembly of stable T-antigen hexamers at the origin of replication. The hexamers are required for subsequent alterations in the structure of origin DNA (By similarity).</text>
</comment>
<comment type="domain">
    <text evidence="1">The ATP binding/ATPase domain is required for proper hexamer assembly and helicase activity.</text>
</comment>
<comment type="PTM">
    <text evidence="1">Phosphorylated on both serine and threonine residues. Small t antigen inhibits the dephosphorylation by the AC form of PP2A (By similarity).</text>
</comment>
<comment type="PTM">
    <text evidence="1">O-Glycosylated near the C-terminal region.</text>
</comment>
<comment type="PTM">
    <text evidence="1">Acetylated by CBP in a TP53-dependent manner.</text>
</comment>
<organism>
    <name type="scientific">Budgerigar fledgling disease virus</name>
    <name type="common">BFPyV</name>
    <name type="synonym">Aves polyomavirus 1</name>
    <dbReference type="NCBI Taxonomy" id="1891747"/>
    <lineage>
        <taxon>Viruses</taxon>
        <taxon>Monodnaviria</taxon>
        <taxon>Shotokuvirae</taxon>
        <taxon>Cossaviricota</taxon>
        <taxon>Papovaviricetes</taxon>
        <taxon>Sepolyvirales</taxon>
        <taxon>Polyomaviridae</taxon>
        <taxon>Gammapolyomavirus</taxon>
    </lineage>
</organism>
<evidence type="ECO:0000250" key="1"/>
<evidence type="ECO:0000250" key="2">
    <source>
        <dbReference type="UniProtKB" id="P03070"/>
    </source>
</evidence>
<evidence type="ECO:0000255" key="3">
    <source>
        <dbReference type="PROSITE-ProRule" id="PRU00286"/>
    </source>
</evidence>
<evidence type="ECO:0000255" key="4">
    <source>
        <dbReference type="PROSITE-ProRule" id="PRU00551"/>
    </source>
</evidence>
<evidence type="ECO:0000255" key="5">
    <source>
        <dbReference type="PROSITE-ProRule" id="PRU00620"/>
    </source>
</evidence>
<evidence type="ECO:0000255" key="6">
    <source>
        <dbReference type="PROSITE-ProRule" id="PRU00671"/>
    </source>
</evidence>
<evidence type="ECO:0000256" key="7">
    <source>
        <dbReference type="SAM" id="MobiDB-lite"/>
    </source>
</evidence>
<evidence type="ECO:0000305" key="8"/>
<feature type="chain" id="PRO_0000115035" description="Large T antigen">
    <location>
        <begin position="1"/>
        <end position="587"/>
    </location>
</feature>
<feature type="domain" description="J" evidence="3">
    <location>
        <begin position="6"/>
        <end position="82"/>
    </location>
</feature>
<feature type="domain" description="SF3 helicase" evidence="4">
    <location>
        <begin position="360"/>
        <end position="520"/>
    </location>
</feature>
<feature type="DNA-binding region" description="T-ag OBD" evidence="5">
    <location>
        <begin position="102"/>
        <end position="219"/>
    </location>
</feature>
<feature type="zinc finger region" description="T-ag D1-type" evidence="6">
    <location>
        <begin position="221"/>
        <end position="319"/>
    </location>
</feature>
<feature type="region of interest" description="Disordered" evidence="7">
    <location>
        <begin position="58"/>
        <end position="78"/>
    </location>
</feature>
<feature type="compositionally biased region" description="Acidic residues" evidence="7">
    <location>
        <begin position="65"/>
        <end position="75"/>
    </location>
</feature>
<feature type="binding site" evidence="6">
    <location>
        <position position="258"/>
    </location>
    <ligand>
        <name>Zn(2+)</name>
        <dbReference type="ChEBI" id="CHEBI:29105"/>
    </ligand>
</feature>
<feature type="binding site" evidence="6">
    <location>
        <position position="261"/>
    </location>
    <ligand>
        <name>Zn(2+)</name>
        <dbReference type="ChEBI" id="CHEBI:29105"/>
    </ligand>
</feature>
<feature type="binding site" evidence="6">
    <location>
        <position position="275"/>
    </location>
    <ligand>
        <name>Zn(2+)</name>
        <dbReference type="ChEBI" id="CHEBI:29105"/>
    </ligand>
</feature>
<feature type="binding site" evidence="6">
    <location>
        <position position="279"/>
    </location>
    <ligand>
        <name>Zn(2+)</name>
        <dbReference type="ChEBI" id="CHEBI:29105"/>
    </ligand>
</feature>
<feature type="binding site" evidence="4">
    <location>
        <begin position="386"/>
        <end position="393"/>
    </location>
    <ligand>
        <name>ATP</name>
        <dbReference type="ChEBI" id="CHEBI:30616"/>
    </ligand>
</feature>
<dbReference type="EC" id="5.6.2.4" evidence="2"/>
<dbReference type="EMBL" id="M20775">
    <property type="protein sequence ID" value="AAB59760.1"/>
    <property type="molecule type" value="Genomic_DNA"/>
</dbReference>
<dbReference type="PIR" id="D29194">
    <property type="entry name" value="TVVPBF"/>
</dbReference>
<dbReference type="SMR" id="P13894"/>
<dbReference type="Proteomes" id="UP000134051">
    <property type="component" value="Genome"/>
</dbReference>
<dbReference type="GO" id="GO:0042025">
    <property type="term" value="C:host cell nucleus"/>
    <property type="evidence" value="ECO:0007669"/>
    <property type="project" value="UniProtKB-SubCell"/>
</dbReference>
<dbReference type="GO" id="GO:0005524">
    <property type="term" value="F:ATP binding"/>
    <property type="evidence" value="ECO:0007669"/>
    <property type="project" value="UniProtKB-KW"/>
</dbReference>
<dbReference type="GO" id="GO:0016887">
    <property type="term" value="F:ATP hydrolysis activity"/>
    <property type="evidence" value="ECO:0007669"/>
    <property type="project" value="RHEA"/>
</dbReference>
<dbReference type="GO" id="GO:0003688">
    <property type="term" value="F:DNA replication origin binding"/>
    <property type="evidence" value="ECO:0007669"/>
    <property type="project" value="InterPro"/>
</dbReference>
<dbReference type="GO" id="GO:0004386">
    <property type="term" value="F:helicase activity"/>
    <property type="evidence" value="ECO:0007669"/>
    <property type="project" value="UniProtKB-KW"/>
</dbReference>
<dbReference type="GO" id="GO:0008270">
    <property type="term" value="F:zinc ion binding"/>
    <property type="evidence" value="ECO:0007669"/>
    <property type="project" value="UniProtKB-KW"/>
</dbReference>
<dbReference type="GO" id="GO:0006260">
    <property type="term" value="P:DNA replication"/>
    <property type="evidence" value="ECO:0007669"/>
    <property type="project" value="UniProtKB-KW"/>
</dbReference>
<dbReference type="GO" id="GO:0039645">
    <property type="term" value="P:symbiont-mediated perturbation of host cell cycle G1/S transition checkpoint"/>
    <property type="evidence" value="ECO:0007669"/>
    <property type="project" value="UniProtKB-KW"/>
</dbReference>
<dbReference type="GO" id="GO:0052170">
    <property type="term" value="P:symbiont-mediated suppression of host innate immune response"/>
    <property type="evidence" value="ECO:0007669"/>
    <property type="project" value="UniProtKB-KW"/>
</dbReference>
<dbReference type="GO" id="GO:0039576">
    <property type="term" value="P:symbiont-mediated suppression of host JAK-STAT cascade via inhibition of JAK1 activity"/>
    <property type="evidence" value="ECO:0007669"/>
    <property type="project" value="UniProtKB-KW"/>
</dbReference>
<dbReference type="GO" id="GO:0039502">
    <property type="term" value="P:symbiont-mediated suppression of host type I interferon-mediated signaling pathway"/>
    <property type="evidence" value="ECO:0007669"/>
    <property type="project" value="UniProtKB-KW"/>
</dbReference>
<dbReference type="CDD" id="cd06257">
    <property type="entry name" value="DnaJ"/>
    <property type="match status" value="1"/>
</dbReference>
<dbReference type="Gene3D" id="3.40.1310.20">
    <property type="match status" value="1"/>
</dbReference>
<dbReference type="Gene3D" id="1.10.287.110">
    <property type="entry name" value="DnaJ domain"/>
    <property type="match status" value="1"/>
</dbReference>
<dbReference type="Gene3D" id="1.20.1050.70">
    <property type="entry name" value="Large T antigen, SV40, domain 3"/>
    <property type="match status" value="1"/>
</dbReference>
<dbReference type="Gene3D" id="3.40.50.300">
    <property type="entry name" value="P-loop containing nucleotide triphosphate hydrolases"/>
    <property type="match status" value="1"/>
</dbReference>
<dbReference type="Gene3D" id="1.10.10.510">
    <property type="entry name" value="Zinc finger, large T-antigen D1 domain"/>
    <property type="match status" value="1"/>
</dbReference>
<dbReference type="InterPro" id="IPR001623">
    <property type="entry name" value="DnaJ_domain"/>
</dbReference>
<dbReference type="InterPro" id="IPR014015">
    <property type="entry name" value="Helicase_SF3_DNA-vir"/>
</dbReference>
<dbReference type="InterPro" id="IPR036869">
    <property type="entry name" value="J_dom_sf"/>
</dbReference>
<dbReference type="InterPro" id="IPR010932">
    <property type="entry name" value="Lg_T_Ag_Polyomavir_C"/>
</dbReference>
<dbReference type="InterPro" id="IPR027417">
    <property type="entry name" value="P-loop_NTPase"/>
</dbReference>
<dbReference type="InterPro" id="IPR003133">
    <property type="entry name" value="T_Ag_DNA-bd"/>
</dbReference>
<dbReference type="InterPro" id="IPR017910">
    <property type="entry name" value="Znf_lg_T-Ag_D1-typ"/>
</dbReference>
<dbReference type="InterPro" id="IPR037102">
    <property type="entry name" value="Znf_lg_T-Ag_D1_dom_sf"/>
</dbReference>
<dbReference type="Pfam" id="PF00226">
    <property type="entry name" value="DnaJ"/>
    <property type="match status" value="1"/>
</dbReference>
<dbReference type="Pfam" id="PF06431">
    <property type="entry name" value="Polyoma_lg_T_C"/>
    <property type="match status" value="1"/>
</dbReference>
<dbReference type="Pfam" id="PF02217">
    <property type="entry name" value="T_Ag_DNA_bind"/>
    <property type="match status" value="1"/>
</dbReference>
<dbReference type="SMART" id="SM00271">
    <property type="entry name" value="DnaJ"/>
    <property type="match status" value="1"/>
</dbReference>
<dbReference type="SUPFAM" id="SSF46565">
    <property type="entry name" value="Chaperone J-domain"/>
    <property type="match status" value="1"/>
</dbReference>
<dbReference type="SUPFAM" id="SSF55464">
    <property type="entry name" value="Origin of replication-binding domain, RBD-like"/>
    <property type="match status" value="1"/>
</dbReference>
<dbReference type="SUPFAM" id="SSF52540">
    <property type="entry name" value="P-loop containing nucleoside triphosphate hydrolases"/>
    <property type="match status" value="1"/>
</dbReference>
<dbReference type="PROSITE" id="PS50076">
    <property type="entry name" value="DNAJ_2"/>
    <property type="match status" value="1"/>
</dbReference>
<dbReference type="PROSITE" id="PS51206">
    <property type="entry name" value="SF3_HELICASE_1"/>
    <property type="match status" value="1"/>
</dbReference>
<dbReference type="PROSITE" id="PS51287">
    <property type="entry name" value="T_AG_OBD"/>
    <property type="match status" value="1"/>
</dbReference>
<dbReference type="PROSITE" id="PS51341">
    <property type="entry name" value="ZF_LTAG_D1"/>
    <property type="match status" value="1"/>
</dbReference>
<proteinExistence type="inferred from homology"/>
<organismHost>
    <name type="scientific">Psittacidae</name>
    <name type="common">parrots</name>
    <dbReference type="NCBI Taxonomy" id="9224"/>
</organismHost>
<keyword id="KW-0025">Alternative splicing</keyword>
<keyword id="KW-0067">ATP-binding</keyword>
<keyword id="KW-0235">DNA replication</keyword>
<keyword id="KW-0238">DNA-binding</keyword>
<keyword id="KW-0244">Early protein</keyword>
<keyword id="KW-1078">G1/S host cell cycle checkpoint dysregulation by virus</keyword>
<keyword id="KW-0347">Helicase</keyword>
<keyword id="KW-1048">Host nucleus</keyword>
<keyword id="KW-0945">Host-virus interaction</keyword>
<keyword id="KW-0378">Hydrolase</keyword>
<keyword id="KW-1090">Inhibition of host innate immune response by virus</keyword>
<keyword id="KW-1114">Inhibition of host interferon signaling pathway by virus</keyword>
<keyword id="KW-1096">Inhibition of host JAK1 by virus</keyword>
<keyword id="KW-0922">Interferon antiviral system evasion</keyword>
<keyword id="KW-0413">Isomerase</keyword>
<keyword id="KW-0460">Magnesium</keyword>
<keyword id="KW-0479">Metal-binding</keyword>
<keyword id="KW-1121">Modulation of host cell cycle by virus</keyword>
<keyword id="KW-0547">Nucleotide-binding</keyword>
<keyword id="KW-0597">Phosphoprotein</keyword>
<keyword id="KW-1185">Reference proteome</keyword>
<keyword id="KW-0899">Viral immunoevasion</keyword>
<keyword id="KW-0862">Zinc</keyword>
<keyword id="KW-0863">Zinc-finger</keyword>
<sequence length="587" mass="67133">MASLRRLTELLCLPVTATAADIKTAYRRTALKYHPDKGGDEEKMKELNTLMEEFRETEGLRADETLEDSDPEPEESGYATFENVSVPDIDGAFFKLMKLKKCMQTYFSVNERRKQQSCPDCHLLITSITKMPQLKAHLYEHFGIKGHIVAHWTGIALLVLQLEKPTRISTVHNFCKKYCTISICSVRGIKKNCVHALIKTLLDVPGLDLEECSIDMNVVDEKQFMHAMLYDYAVQIDCTDALLLLAIYKRLAQPTDKCPECQKDKDTVKRKRSTHIDDHPRHQHNASLFLHIKDQKRLCQCAVDAVLAEKRFRSATMTRDERLKERFRTVLRNIQELLDGETEAIDDFVTAILLFNMLFPDVDVIVDILQTMVKNPPKRRYYIFKGPVNTGKTTVAAAILALCTGASLNVNGTPDRLQFELGCAIDQFMVLFEDVKGTPEPDTNLPSGFGMVNLDNLRDHLEGSVPVNLERKHQNKVSQIFPPGIITMNNYVLPHTIQARARTLVNFKHIKVYAKALRNNISVLEQRLITKPETLLAYLLIRPESEKEISADLRAEFLTVIENLKFEVDERFFQYNNRLHEGLCVHE</sequence>
<reference key="1">
    <citation type="journal article" date="1988" name="Virology">
        <title>The genome of budgerigar fledgling disease virus, an avian polyomavirus.</title>
        <authorList>
            <person name="Rott O."/>
            <person name="Kroeger M."/>
            <person name="Mueller H."/>
            <person name="Hobom G."/>
        </authorList>
    </citation>
    <scope>NUCLEOTIDE SEQUENCE [GENOMIC DNA]</scope>
</reference>
<reference key="2">
    <citation type="submission" date="1995-07" db="EMBL/GenBank/DDBJ databases">
        <authorList>
            <person name="Stoll R."/>
            <person name="Dong L."/>
            <person name="Kouwenhoven B."/>
            <person name="Hobom G."/>
            <person name="Mueller H."/>
        </authorList>
    </citation>
    <scope>SEQUENCE REVISION</scope>
</reference>